<reference key="1">
    <citation type="journal article" date="2008" name="PLoS Genet.">
        <title>Genomic islands in the pathogenic filamentous fungus Aspergillus fumigatus.</title>
        <authorList>
            <person name="Fedorova N.D."/>
            <person name="Khaldi N."/>
            <person name="Joardar V.S."/>
            <person name="Maiti R."/>
            <person name="Amedeo P."/>
            <person name="Anderson M.J."/>
            <person name="Crabtree J."/>
            <person name="Silva J.C."/>
            <person name="Badger J.H."/>
            <person name="Albarraq A."/>
            <person name="Angiuoli S."/>
            <person name="Bussey H."/>
            <person name="Bowyer P."/>
            <person name="Cotty P.J."/>
            <person name="Dyer P.S."/>
            <person name="Egan A."/>
            <person name="Galens K."/>
            <person name="Fraser-Liggett C.M."/>
            <person name="Haas B.J."/>
            <person name="Inman J.M."/>
            <person name="Kent R."/>
            <person name="Lemieux S."/>
            <person name="Malavazi I."/>
            <person name="Orvis J."/>
            <person name="Roemer T."/>
            <person name="Ronning C.M."/>
            <person name="Sundaram J.P."/>
            <person name="Sutton G."/>
            <person name="Turner G."/>
            <person name="Venter J.C."/>
            <person name="White O.R."/>
            <person name="Whitty B.R."/>
            <person name="Youngman P."/>
            <person name="Wolfe K.H."/>
            <person name="Goldman G.H."/>
            <person name="Wortman J.R."/>
            <person name="Jiang B."/>
            <person name="Denning D.W."/>
            <person name="Nierman W.C."/>
        </authorList>
    </citation>
    <scope>NUCLEOTIDE SEQUENCE [LARGE SCALE GENOMIC DNA]</scope>
    <source>
        <strain>ATCC 1020 / DSM 3700 / CBS 544.65 / FGSC A1164 / JCM 1740 / NRRL 181 / WB 181</strain>
    </source>
</reference>
<comment type="function">
    <text evidence="2">Aminopeptidase that preferentially cleaves di- and tripeptides. Also has low epoxide hydrolase activity (in vitro). Can hydrolyze the epoxide leukotriene LTA(4) but it forms preferentially 5,6-dihydroxy-7,9,11,14-eicosatetraenoic acid rather than the cytokine leukotriene B(4) as the product compared to the homologous mammalian enzyme (in vitro).</text>
</comment>
<comment type="catalytic activity">
    <reaction evidence="2">
        <text>an epoxide + H2O = an ethanediol</text>
        <dbReference type="Rhea" id="RHEA:19037"/>
        <dbReference type="ChEBI" id="CHEBI:15377"/>
        <dbReference type="ChEBI" id="CHEBI:32955"/>
        <dbReference type="ChEBI" id="CHEBI:140594"/>
        <dbReference type="EC" id="3.3.2.10"/>
    </reaction>
</comment>
<comment type="cofactor">
    <cofactor evidence="2">
        <name>Zn(2+)</name>
        <dbReference type="ChEBI" id="CHEBI:29105"/>
    </cofactor>
    <text evidence="2">Binds 1 zinc ion per subunit.</text>
</comment>
<comment type="subcellular location">
    <subcellularLocation>
        <location evidence="2">Cytoplasm</location>
    </subcellularLocation>
    <subcellularLocation>
        <location evidence="2">Nucleus</location>
    </subcellularLocation>
</comment>
<comment type="similarity">
    <text evidence="4">Belongs to the peptidase M1 family.</text>
</comment>
<evidence type="ECO:0000250" key="1">
    <source>
        <dbReference type="UniProtKB" id="P09960"/>
    </source>
</evidence>
<evidence type="ECO:0000250" key="2">
    <source>
        <dbReference type="UniProtKB" id="Q10740"/>
    </source>
</evidence>
<evidence type="ECO:0000255" key="3">
    <source>
        <dbReference type="PROSITE-ProRule" id="PRU10095"/>
    </source>
</evidence>
<evidence type="ECO:0000305" key="4"/>
<keyword id="KW-0963">Cytoplasm</keyword>
<keyword id="KW-0378">Hydrolase</keyword>
<keyword id="KW-0479">Metal-binding</keyword>
<keyword id="KW-0482">Metalloprotease</keyword>
<keyword id="KW-0539">Nucleus</keyword>
<keyword id="KW-0645">Protease</keyword>
<keyword id="KW-1185">Reference proteome</keyword>
<keyword id="KW-0862">Zinc</keyword>
<gene>
    <name type="ORF">NFIA_083260</name>
</gene>
<feature type="chain" id="PRO_0000324933" description="Leucine aminopeptidase 2">
    <location>
        <begin position="1"/>
        <end position="617"/>
    </location>
</feature>
<feature type="active site" description="Proton acceptor" evidence="3">
    <location>
        <position position="301"/>
    </location>
</feature>
<feature type="active site" description="Proton donor" evidence="3">
    <location>
        <position position="388"/>
    </location>
</feature>
<feature type="binding site" evidence="1">
    <location>
        <begin position="139"/>
        <end position="141"/>
    </location>
    <ligand>
        <name>a peptide</name>
        <dbReference type="ChEBI" id="CHEBI:60466"/>
    </ligand>
</feature>
<feature type="binding site" evidence="1">
    <location>
        <begin position="271"/>
        <end position="276"/>
    </location>
    <ligand>
        <name>a peptide</name>
        <dbReference type="ChEBI" id="CHEBI:60466"/>
    </ligand>
</feature>
<feature type="binding site" evidence="3">
    <location>
        <position position="300"/>
    </location>
    <ligand>
        <name>Zn(2+)</name>
        <dbReference type="ChEBI" id="CHEBI:29105"/>
        <note>catalytic</note>
    </ligand>
</feature>
<feature type="binding site" evidence="3">
    <location>
        <position position="304"/>
    </location>
    <ligand>
        <name>Zn(2+)</name>
        <dbReference type="ChEBI" id="CHEBI:29105"/>
        <note>catalytic</note>
    </ligand>
</feature>
<feature type="binding site" evidence="3">
    <location>
        <position position="323"/>
    </location>
    <ligand>
        <name>Zn(2+)</name>
        <dbReference type="ChEBI" id="CHEBI:29105"/>
        <note>catalytic</note>
    </ligand>
</feature>
<name>LKHA4_NEOFI</name>
<dbReference type="EC" id="3.4.11.-"/>
<dbReference type="EC" id="3.3.2.10"/>
<dbReference type="EMBL" id="DS027696">
    <property type="protein sequence ID" value="EAW18375.1"/>
    <property type="molecule type" value="Genomic_DNA"/>
</dbReference>
<dbReference type="RefSeq" id="XP_001260272.1">
    <property type="nucleotide sequence ID" value="XM_001260271.1"/>
</dbReference>
<dbReference type="SMR" id="A1DG68"/>
<dbReference type="STRING" id="331117.A1DG68"/>
<dbReference type="MEROPS" id="M01.034"/>
<dbReference type="EnsemblFungi" id="EAW18375">
    <property type="protein sequence ID" value="EAW18375"/>
    <property type="gene ID" value="NFIA_083260"/>
</dbReference>
<dbReference type="GeneID" id="4586829"/>
<dbReference type="KEGG" id="nfi:NFIA_083260"/>
<dbReference type="VEuPathDB" id="FungiDB:NFIA_083260"/>
<dbReference type="eggNOG" id="KOG1047">
    <property type="taxonomic scope" value="Eukaryota"/>
</dbReference>
<dbReference type="HOGENOM" id="CLU_014505_1_1_1"/>
<dbReference type="OMA" id="CTALQWM"/>
<dbReference type="OrthoDB" id="79562at2759"/>
<dbReference type="Proteomes" id="UP000006702">
    <property type="component" value="Unassembled WGS sequence"/>
</dbReference>
<dbReference type="GO" id="GO:0005829">
    <property type="term" value="C:cytosol"/>
    <property type="evidence" value="ECO:0007669"/>
    <property type="project" value="TreeGrafter"/>
</dbReference>
<dbReference type="GO" id="GO:0000328">
    <property type="term" value="C:fungal-type vacuole lumen"/>
    <property type="evidence" value="ECO:0007669"/>
    <property type="project" value="EnsemblFungi"/>
</dbReference>
<dbReference type="GO" id="GO:0005771">
    <property type="term" value="C:multivesicular body"/>
    <property type="evidence" value="ECO:0007669"/>
    <property type="project" value="EnsemblFungi"/>
</dbReference>
<dbReference type="GO" id="GO:0005634">
    <property type="term" value="C:nucleus"/>
    <property type="evidence" value="ECO:0007669"/>
    <property type="project" value="UniProtKB-SubCell"/>
</dbReference>
<dbReference type="GO" id="GO:0061957">
    <property type="term" value="C:NVT complex"/>
    <property type="evidence" value="ECO:0007669"/>
    <property type="project" value="EnsemblFungi"/>
</dbReference>
<dbReference type="GO" id="GO:0004177">
    <property type="term" value="F:aminopeptidase activity"/>
    <property type="evidence" value="ECO:0000250"/>
    <property type="project" value="UniProtKB"/>
</dbReference>
<dbReference type="GO" id="GO:0004301">
    <property type="term" value="F:epoxide hydrolase activity"/>
    <property type="evidence" value="ECO:0000250"/>
    <property type="project" value="UniProtKB"/>
</dbReference>
<dbReference type="GO" id="GO:0008237">
    <property type="term" value="F:metallopeptidase activity"/>
    <property type="evidence" value="ECO:0007669"/>
    <property type="project" value="UniProtKB-KW"/>
</dbReference>
<dbReference type="GO" id="GO:0008270">
    <property type="term" value="F:zinc ion binding"/>
    <property type="evidence" value="ECO:0000250"/>
    <property type="project" value="UniProtKB"/>
</dbReference>
<dbReference type="GO" id="GO:0120113">
    <property type="term" value="P:cytoplasm to vacuole targeting by the NVT pathway"/>
    <property type="evidence" value="ECO:0007669"/>
    <property type="project" value="EnsemblFungi"/>
</dbReference>
<dbReference type="GO" id="GO:0006629">
    <property type="term" value="P:lipid metabolic process"/>
    <property type="evidence" value="ECO:0007669"/>
    <property type="project" value="EnsemblFungi"/>
</dbReference>
<dbReference type="GO" id="GO:0043171">
    <property type="term" value="P:peptide catabolic process"/>
    <property type="evidence" value="ECO:0000250"/>
    <property type="project" value="UniProtKB"/>
</dbReference>
<dbReference type="GO" id="GO:0030163">
    <property type="term" value="P:protein catabolic process"/>
    <property type="evidence" value="ECO:0007669"/>
    <property type="project" value="EnsemblFungi"/>
</dbReference>
<dbReference type="GO" id="GO:0006508">
    <property type="term" value="P:proteolysis"/>
    <property type="evidence" value="ECO:0007669"/>
    <property type="project" value="UniProtKB-KW"/>
</dbReference>
<dbReference type="CDD" id="cd09599">
    <property type="entry name" value="M1_LTA4H"/>
    <property type="match status" value="1"/>
</dbReference>
<dbReference type="FunFam" id="1.10.390.10:FF:000009">
    <property type="entry name" value="Leukotriene A(4) hydrolase"/>
    <property type="match status" value="1"/>
</dbReference>
<dbReference type="FunFam" id="1.25.40.320:FF:000001">
    <property type="entry name" value="Leukotriene A(4) hydrolase"/>
    <property type="match status" value="1"/>
</dbReference>
<dbReference type="FunFam" id="2.60.40.1730:FF:000004">
    <property type="entry name" value="Leukotriene A(4) hydrolase"/>
    <property type="match status" value="1"/>
</dbReference>
<dbReference type="FunFam" id="3.30.2010.30:FF:000001">
    <property type="entry name" value="Leukotriene A(4) hydrolase"/>
    <property type="match status" value="1"/>
</dbReference>
<dbReference type="Gene3D" id="3.30.2010.30">
    <property type="match status" value="1"/>
</dbReference>
<dbReference type="Gene3D" id="1.10.390.10">
    <property type="entry name" value="Neutral Protease Domain 2"/>
    <property type="match status" value="1"/>
</dbReference>
<dbReference type="Gene3D" id="1.25.40.320">
    <property type="entry name" value="Peptidase M1, leukotriene A4 hydrolase/aminopeptidase C-terminal domain"/>
    <property type="match status" value="1"/>
</dbReference>
<dbReference type="Gene3D" id="2.60.40.1730">
    <property type="entry name" value="tricorn interacting facor f3 domain"/>
    <property type="match status" value="1"/>
</dbReference>
<dbReference type="InterPro" id="IPR045357">
    <property type="entry name" value="Aminopeptidase_N-like_N"/>
</dbReference>
<dbReference type="InterPro" id="IPR042097">
    <property type="entry name" value="Aminopeptidase_N-like_N_sf"/>
</dbReference>
<dbReference type="InterPro" id="IPR016024">
    <property type="entry name" value="ARM-type_fold"/>
</dbReference>
<dbReference type="InterPro" id="IPR012777">
    <property type="entry name" value="LTA4H"/>
</dbReference>
<dbReference type="InterPro" id="IPR049980">
    <property type="entry name" value="LTA4H_cat"/>
</dbReference>
<dbReference type="InterPro" id="IPR038502">
    <property type="entry name" value="M1_LTA-4_hydro/amino_C_sf"/>
</dbReference>
<dbReference type="InterPro" id="IPR034015">
    <property type="entry name" value="M1_LTA4H"/>
</dbReference>
<dbReference type="InterPro" id="IPR001930">
    <property type="entry name" value="Peptidase_M1"/>
</dbReference>
<dbReference type="InterPro" id="IPR015211">
    <property type="entry name" value="Peptidase_M1_C"/>
</dbReference>
<dbReference type="InterPro" id="IPR014782">
    <property type="entry name" value="Peptidase_M1_dom"/>
</dbReference>
<dbReference type="InterPro" id="IPR027268">
    <property type="entry name" value="Peptidase_M4/M1_CTD_sf"/>
</dbReference>
<dbReference type="NCBIfam" id="TIGR02411">
    <property type="entry name" value="leuko_A4_hydro"/>
    <property type="match status" value="1"/>
</dbReference>
<dbReference type="PANTHER" id="PTHR45726">
    <property type="entry name" value="LEUKOTRIENE A-4 HYDROLASE"/>
    <property type="match status" value="1"/>
</dbReference>
<dbReference type="PANTHER" id="PTHR45726:SF3">
    <property type="entry name" value="LEUKOTRIENE A-4 HYDROLASE"/>
    <property type="match status" value="1"/>
</dbReference>
<dbReference type="Pfam" id="PF09127">
    <property type="entry name" value="Leuk-A4-hydro_C"/>
    <property type="match status" value="1"/>
</dbReference>
<dbReference type="Pfam" id="PF01433">
    <property type="entry name" value="Peptidase_M1"/>
    <property type="match status" value="1"/>
</dbReference>
<dbReference type="Pfam" id="PF17900">
    <property type="entry name" value="Peptidase_M1_N"/>
    <property type="match status" value="1"/>
</dbReference>
<dbReference type="PRINTS" id="PR00756">
    <property type="entry name" value="ALADIPTASE"/>
</dbReference>
<dbReference type="SMART" id="SM01263">
    <property type="entry name" value="Leuk-A4-hydro_C"/>
    <property type="match status" value="1"/>
</dbReference>
<dbReference type="SUPFAM" id="SSF48371">
    <property type="entry name" value="ARM repeat"/>
    <property type="match status" value="1"/>
</dbReference>
<dbReference type="SUPFAM" id="SSF63737">
    <property type="entry name" value="Leukotriene A4 hydrolase N-terminal domain"/>
    <property type="match status" value="1"/>
</dbReference>
<dbReference type="SUPFAM" id="SSF55486">
    <property type="entry name" value="Metalloproteases ('zincins'), catalytic domain"/>
    <property type="match status" value="1"/>
</dbReference>
<dbReference type="PROSITE" id="PS00142">
    <property type="entry name" value="ZINC_PROTEASE"/>
    <property type="match status" value="1"/>
</dbReference>
<protein>
    <recommendedName>
        <fullName>Leucine aminopeptidase 2</fullName>
        <ecNumber>3.4.11.-</ecNumber>
    </recommendedName>
    <alternativeName>
        <fullName>Epoxide hydrolase</fullName>
        <ecNumber>3.3.2.10</ecNumber>
    </alternativeName>
    <alternativeName>
        <fullName>Leukotriene A-4 hydrolase homolog</fullName>
        <shortName>LTA-4 hydrolase</shortName>
    </alternativeName>
</protein>
<sequence>MPTVVNPPRDPNTLSNYNNWVSTHITANFDILFDQRKLAGSVIHQFRSTTHGESNHIILDTNHLDIGSVKVNGQPSEWEYLPRLEPYGTPLKIKLDQGVKLNEMIEVDISVKTTEKCTALQWLTPAQTSNKKHPYMFSQCQAIHARSIFPCQDTPDVKCTLDFNITSPLPVIASGLPVRGSSEAPKSDGKTLYKFHQKVPIPSYLFALASGDISEAPIGPRSVVATSPDKLGECQWELEADTEKFINAIEKIVYPYVWGEYNVLILPPSFPYGGMENPIFTFATPSIISKDRENIDVIAHELAHSWSGNLVTNASWEHFWLNEGWTTYLERRIVAAVHGEPYRHFSAIIGWKALTDSVEHFGPEHDFTKLITNLKGMDPDDAFSSIPYEKGFNFLFHLENLVGKSKFDLFIPHYFNKYKGKSLDSYEFKSTILDFFKDDSEASTALNELDWDSWFYAPGLPPKPDFDTSLVDVVYDLAKKWLSLPNSSFKPQPEDIRGLTANQVVVFLEQILVSERQLTPELSKLMGEIYGLAASQNIEVANLYFQVGLQAGDASVLEPTADLLGKIGRMKFVRPLYRKLAKFDRKRAVETFEKHRDFYHPICRAMVEKDLFGKKDE</sequence>
<proteinExistence type="inferred from homology"/>
<accession>A1DG68</accession>
<organism>
    <name type="scientific">Neosartorya fischeri (strain ATCC 1020 / DSM 3700 / CBS 544.65 / FGSC A1164 / JCM 1740 / NRRL 181 / WB 181)</name>
    <name type="common">Aspergillus fischerianus</name>
    <dbReference type="NCBI Taxonomy" id="331117"/>
    <lineage>
        <taxon>Eukaryota</taxon>
        <taxon>Fungi</taxon>
        <taxon>Dikarya</taxon>
        <taxon>Ascomycota</taxon>
        <taxon>Pezizomycotina</taxon>
        <taxon>Eurotiomycetes</taxon>
        <taxon>Eurotiomycetidae</taxon>
        <taxon>Eurotiales</taxon>
        <taxon>Aspergillaceae</taxon>
        <taxon>Aspergillus</taxon>
        <taxon>Aspergillus subgen. Fumigati</taxon>
    </lineage>
</organism>